<comment type="subcellular location">
    <subcellularLocation>
        <location evidence="2">Cell membrane</location>
        <topology evidence="2">Multi-pass membrane protein</topology>
    </subcellularLocation>
</comment>
<comment type="similarity">
    <text evidence="2">Belongs to the UPF0104 family.</text>
</comment>
<evidence type="ECO:0000255" key="1"/>
<evidence type="ECO:0000305" key="2"/>
<sequence length="338" mass="37196">MKHKGAILIVIGVVALAAMILIIGPGEIEDALRKADPVYVLMAVVLEFIILALFTLRWSITTRAVSIDVGKRHLFPMLLVGMAINNLTPSARGGGEPVRAYMLGKYSRASMESAFATVIADRGLDTFPFIFLAVLTIIGIVLYFDLSRWILAALIASVVIIVVAFFLALYVSVDRDAGERITGWILGVVKRFYRKNHERLERRVRSALHEFQSTMRMMLKEKNVLVYGIPISFLIWILEIIRVYLIFTAFGTDISLLVIAEVFILATLIGMIPLLPGGLGAVDGIMIVFYSYAGVSPSVSAAATVVERLISFWMISAMGVAAIPYFGSSVSEKLMDKL</sequence>
<feature type="chain" id="PRO_0000138108" description="UPF0104 membrane protein MTH_1261">
    <location>
        <begin position="1"/>
        <end position="338"/>
    </location>
</feature>
<feature type="transmembrane region" description="Helical" evidence="1">
    <location>
        <begin position="6"/>
        <end position="26"/>
    </location>
</feature>
<feature type="transmembrane region" description="Helical" evidence="1">
    <location>
        <begin position="36"/>
        <end position="56"/>
    </location>
</feature>
<feature type="transmembrane region" description="Helical" evidence="1">
    <location>
        <begin position="124"/>
        <end position="144"/>
    </location>
</feature>
<feature type="transmembrane region" description="Helical" evidence="1">
    <location>
        <begin position="149"/>
        <end position="169"/>
    </location>
</feature>
<feature type="transmembrane region" description="Helical" evidence="1">
    <location>
        <begin position="231"/>
        <end position="251"/>
    </location>
</feature>
<feature type="transmembrane region" description="Helical" evidence="1">
    <location>
        <begin position="254"/>
        <end position="274"/>
    </location>
</feature>
<feature type="transmembrane region" description="Helical" evidence="1">
    <location>
        <begin position="275"/>
        <end position="295"/>
    </location>
</feature>
<feature type="transmembrane region" description="Helical" evidence="1">
    <location>
        <begin position="310"/>
        <end position="330"/>
    </location>
</feature>
<organism>
    <name type="scientific">Methanothermobacter thermautotrophicus (strain ATCC 29096 / DSM 1053 / JCM 10044 / NBRC 100330 / Delta H)</name>
    <name type="common">Methanobacterium thermoautotrophicum</name>
    <dbReference type="NCBI Taxonomy" id="187420"/>
    <lineage>
        <taxon>Archaea</taxon>
        <taxon>Methanobacteriati</taxon>
        <taxon>Methanobacteriota</taxon>
        <taxon>Methanomada group</taxon>
        <taxon>Methanobacteria</taxon>
        <taxon>Methanobacteriales</taxon>
        <taxon>Methanobacteriaceae</taxon>
        <taxon>Methanothermobacter</taxon>
    </lineage>
</organism>
<reference key="1">
    <citation type="journal article" date="1997" name="J. Bacteriol.">
        <title>Complete genome sequence of Methanobacterium thermoautotrophicum deltaH: functional analysis and comparative genomics.</title>
        <authorList>
            <person name="Smith D.R."/>
            <person name="Doucette-Stamm L.A."/>
            <person name="Deloughery C."/>
            <person name="Lee H.-M."/>
            <person name="Dubois J."/>
            <person name="Aldredge T."/>
            <person name="Bashirzadeh R."/>
            <person name="Blakely D."/>
            <person name="Cook R."/>
            <person name="Gilbert K."/>
            <person name="Harrison D."/>
            <person name="Hoang L."/>
            <person name="Keagle P."/>
            <person name="Lumm W."/>
            <person name="Pothier B."/>
            <person name="Qiu D."/>
            <person name="Spadafora R."/>
            <person name="Vicare R."/>
            <person name="Wang Y."/>
            <person name="Wierzbowski J."/>
            <person name="Gibson R."/>
            <person name="Jiwani N."/>
            <person name="Caruso A."/>
            <person name="Bush D."/>
            <person name="Safer H."/>
            <person name="Patwell D."/>
            <person name="Prabhakar S."/>
            <person name="McDougall S."/>
            <person name="Shimer G."/>
            <person name="Goyal A."/>
            <person name="Pietrovski S."/>
            <person name="Church G.M."/>
            <person name="Daniels C.J."/>
            <person name="Mao J.-I."/>
            <person name="Rice P."/>
            <person name="Noelling J."/>
            <person name="Reeve J.N."/>
        </authorList>
    </citation>
    <scope>NUCLEOTIDE SEQUENCE [LARGE SCALE GENOMIC DNA]</scope>
    <source>
        <strain>ATCC 29096 / DSM 1053 / JCM 10044 / NBRC 100330 / Delta H</strain>
    </source>
</reference>
<keyword id="KW-1003">Cell membrane</keyword>
<keyword id="KW-0472">Membrane</keyword>
<keyword id="KW-1185">Reference proteome</keyword>
<keyword id="KW-0812">Transmembrane</keyword>
<keyword id="KW-1133">Transmembrane helix</keyword>
<dbReference type="EMBL" id="AE000666">
    <property type="protein sequence ID" value="AAB85750.1"/>
    <property type="molecule type" value="Genomic_DNA"/>
</dbReference>
<dbReference type="PIR" id="F69035">
    <property type="entry name" value="F69035"/>
</dbReference>
<dbReference type="RefSeq" id="WP_010876885.1">
    <property type="nucleotide sequence ID" value="NC_000916.1"/>
</dbReference>
<dbReference type="FunCoup" id="O27329">
    <property type="interactions" value="1"/>
</dbReference>
<dbReference type="STRING" id="187420.MTH_1261"/>
<dbReference type="PaxDb" id="187420-MTH_1261"/>
<dbReference type="EnsemblBacteria" id="AAB85750">
    <property type="protein sequence ID" value="AAB85750"/>
    <property type="gene ID" value="MTH_1261"/>
</dbReference>
<dbReference type="GeneID" id="1471669"/>
<dbReference type="KEGG" id="mth:MTH_1261"/>
<dbReference type="PATRIC" id="fig|187420.15.peg.1241"/>
<dbReference type="HOGENOM" id="CLU_048072_1_1_2"/>
<dbReference type="InParanoid" id="O27329"/>
<dbReference type="Proteomes" id="UP000005223">
    <property type="component" value="Chromosome"/>
</dbReference>
<dbReference type="GO" id="GO:0005886">
    <property type="term" value="C:plasma membrane"/>
    <property type="evidence" value="ECO:0007669"/>
    <property type="project" value="UniProtKB-SubCell"/>
</dbReference>
<dbReference type="InterPro" id="IPR022791">
    <property type="entry name" value="L-PG_synthase/AglD"/>
</dbReference>
<dbReference type="NCBIfam" id="TIGR00374">
    <property type="entry name" value="flippase-like domain"/>
    <property type="match status" value="1"/>
</dbReference>
<dbReference type="PANTHER" id="PTHR39087">
    <property type="entry name" value="UPF0104 MEMBRANE PROTEIN MJ1595"/>
    <property type="match status" value="1"/>
</dbReference>
<dbReference type="PANTHER" id="PTHR39087:SF2">
    <property type="entry name" value="UPF0104 MEMBRANE PROTEIN MJ1595"/>
    <property type="match status" value="1"/>
</dbReference>
<dbReference type="Pfam" id="PF03706">
    <property type="entry name" value="LPG_synthase_TM"/>
    <property type="match status" value="1"/>
</dbReference>
<protein>
    <recommendedName>
        <fullName>UPF0104 membrane protein MTH_1261</fullName>
    </recommendedName>
</protein>
<proteinExistence type="inferred from homology"/>
<accession>O27329</accession>
<gene>
    <name type="ordered locus">MTH_1261</name>
</gene>
<name>Y1261_METTH</name>